<evidence type="ECO:0000250" key="1"/>
<evidence type="ECO:0000255" key="2"/>
<evidence type="ECO:0000269" key="3">
    <source>
    </source>
</evidence>
<evidence type="ECO:0000269" key="4">
    <source>
    </source>
</evidence>
<evidence type="ECO:0000269" key="5">
    <source>
    </source>
</evidence>
<evidence type="ECO:0000269" key="6">
    <source>
    </source>
</evidence>
<evidence type="ECO:0000305" key="7"/>
<name>C71DK_TOBAC</name>
<organism>
    <name type="scientific">Nicotiana tabacum</name>
    <name type="common">Common tobacco</name>
    <dbReference type="NCBI Taxonomy" id="4097"/>
    <lineage>
        <taxon>Eukaryota</taxon>
        <taxon>Viridiplantae</taxon>
        <taxon>Streptophyta</taxon>
        <taxon>Embryophyta</taxon>
        <taxon>Tracheophyta</taxon>
        <taxon>Spermatophyta</taxon>
        <taxon>Magnoliopsida</taxon>
        <taxon>eudicotyledons</taxon>
        <taxon>Gunneridae</taxon>
        <taxon>Pentapetalae</taxon>
        <taxon>asterids</taxon>
        <taxon>lamiids</taxon>
        <taxon>Solanales</taxon>
        <taxon>Solanaceae</taxon>
        <taxon>Nicotianoideae</taxon>
        <taxon>Nicotianeae</taxon>
        <taxon>Nicotiana</taxon>
    </lineage>
</organism>
<keyword id="KW-0349">Heme</keyword>
<keyword id="KW-0408">Iron</keyword>
<keyword id="KW-0472">Membrane</keyword>
<keyword id="KW-0479">Metal-binding</keyword>
<keyword id="KW-0503">Monooxygenase</keyword>
<keyword id="KW-0560">Oxidoreductase</keyword>
<keyword id="KW-1185">Reference proteome</keyword>
<keyword id="KW-0812">Transmembrane</keyword>
<keyword id="KW-1133">Transmembrane helix</keyword>
<comment type="function">
    <text evidence="3 5">Involved in the biosynthesis of capsidiol. Catalyzes the successive and independent hydroxylations at the C1 and C3 positions of 5-epiaristolochene. The second hydroxylation step is 8-fold more efficient than the first hydroxylation reaction. Capable of utilizing premnaspirodiene as a substrate.</text>
</comment>
<comment type="catalytic activity">
    <reaction evidence="4 5 6">
        <text>(+)-5-epi-aristolochene + 2 reduced [NADPH--hemoprotein reductase] + 2 O2 = capsidiol + 2 oxidized [NADPH--hemoprotein reductase] + 2 H2O + 2 H(+)</text>
        <dbReference type="Rhea" id="RHEA:28226"/>
        <dbReference type="Rhea" id="RHEA-COMP:11964"/>
        <dbReference type="Rhea" id="RHEA-COMP:11965"/>
        <dbReference type="ChEBI" id="CHEBI:15377"/>
        <dbReference type="ChEBI" id="CHEBI:15378"/>
        <dbReference type="ChEBI" id="CHEBI:15379"/>
        <dbReference type="ChEBI" id="CHEBI:23925"/>
        <dbReference type="ChEBI" id="CHEBI:28283"/>
        <dbReference type="ChEBI" id="CHEBI:57618"/>
        <dbReference type="ChEBI" id="CHEBI:58210"/>
        <dbReference type="EC" id="1.14.14.149"/>
    </reaction>
</comment>
<comment type="cofactor">
    <cofactor>
        <name>heme</name>
        <dbReference type="ChEBI" id="CHEBI:30413"/>
    </cofactor>
</comment>
<comment type="activity regulation">
    <text evidence="3">Inhibited by ancymidol and ketoconazole.</text>
</comment>
<comment type="biophysicochemical properties">
    <kinetics>
        <KM evidence="5">19.18 uM for 5-epiaristolochene</KM>
        <KM evidence="5">6.38 uM for 1-deoxycapsidiol</KM>
        <KM evidence="5">1.74 uM for 3-deoxycapsidiol</KM>
    </kinetics>
    <phDependence>
        <text evidence="5">Optimum pH is 7.5.</text>
    </phDependence>
</comment>
<comment type="subcellular location">
    <subcellularLocation>
        <location evidence="7">Membrane</location>
        <topology evidence="7">Single-pass membrane protein</topology>
    </subcellularLocation>
</comment>
<comment type="induction">
    <text evidence="3">Up-regulated 6 to 9 hours after elicitor-treatment and then declines by 12 hours.</text>
</comment>
<comment type="similarity">
    <text evidence="7">Belongs to the cytochrome P450 family.</text>
</comment>
<reference key="1">
    <citation type="journal article" date="2001" name="Arch. Biochem. Biophys.">
        <title>Cloning, heterologous expression, and functional characterization of 5-epi-aristolochene-1,3-dihydroxylase from tobacco (Nicotiana tabacum).</title>
        <authorList>
            <person name="Ralston L."/>
            <person name="Kwon S.T."/>
            <person name="Schoenbeck M."/>
            <person name="Ralston J."/>
            <person name="Schenk D.J."/>
            <person name="Coates R.M."/>
            <person name="Chappell J."/>
        </authorList>
    </citation>
    <scope>NUCLEOTIDE SEQUENCE [MRNA]</scope>
    <scope>FUNCTION</scope>
    <scope>INDUCTION BY ELICITOR</scope>
    <scope>ACTIVITY REGULATION</scope>
</reference>
<reference key="2">
    <citation type="submission" date="2005-09" db="EMBL/GenBank/DDBJ databases">
        <authorList>
            <person name="Ralston L."/>
            <person name="Kwon S.T."/>
            <person name="Schoenbeck M."/>
            <person name="Ralston J.L."/>
            <person name="Schenk D.J."/>
            <person name="Coates R.M."/>
            <person name="Chappell J."/>
        </authorList>
    </citation>
    <scope>SEQUENCE REVISION</scope>
</reference>
<reference key="3">
    <citation type="journal article" date="2003" name="Arch. Biochem. Biophys.">
        <title>Probing sesquiterpene hydroxylase activities in a coupled assay with terpene synthases.</title>
        <authorList>
            <person name="Greenhagen B.T."/>
            <person name="Griggs P."/>
            <person name="Takahashi S."/>
            <person name="Ralston L."/>
            <person name="Chappell J."/>
        </authorList>
    </citation>
    <scope>CATALYTIC ACTIVITY</scope>
</reference>
<reference key="4">
    <citation type="journal article" date="2005" name="J. Biol. Chem.">
        <title>Kinetic and molecular analysis of 5-epiaristolochene 1,3-dihydroxylase, a cytochrome P450 enzyme catalyzing successive hydroxylations of sesquiterpenes.</title>
        <authorList>
            <person name="Takahashi S."/>
            <person name="Zhao Y."/>
            <person name="O'Maille P.E."/>
            <person name="Greenhagen B.T."/>
            <person name="Noel J.P."/>
            <person name="Coates R.M."/>
            <person name="Chappell J."/>
        </authorList>
    </citation>
    <scope>FUNCTION</scope>
    <scope>CATALYTIC ACTIVITY</scope>
    <scope>BIOPHYSICOCHEMICAL PROPERTIES</scope>
    <scope>MUTAGENESIS OF SER-368 AND ILE-486</scope>
</reference>
<reference key="5">
    <citation type="journal article" date="2007" name="J. Biol. Chem.">
        <title>Functional characterization of premnaspirodiene oxygenase, a cytochrome P450 catalyzing regio- and stereo-specific hydroxylations of diverse sesquiterpene substrates.</title>
        <authorList>
            <person name="Takahashi S."/>
            <person name="Yeo Y.S."/>
            <person name="Zhao Y."/>
            <person name="O'Maille P.E."/>
            <person name="Greenhagen B.T."/>
            <person name="Noel J.P."/>
            <person name="Coates R.M."/>
            <person name="Chappell J."/>
        </authorList>
    </citation>
    <scope>CATALYTIC ACTIVITY</scope>
    <scope>MUTAGENESIS OF SER-482; ILE-484 AND ILE-486</scope>
</reference>
<gene>
    <name type="primary">CYP71D20</name>
</gene>
<sequence length="504" mass="57083">MQFFSLVSIFLFLSFLFLLRKWKNSNSQSKKLPPGPWKIPILGSMLHMIGGEPHHVLRDLAKKYGPLMHLQLGEISAVVVTSRDMAKEVLKTHDVVFASRPKIVAMDIICYNQSDIAFSPYGDHWRQMRKICVMELLNAKNVRSFSSIRRDEVVRLIDSIRSDSSSGELVNFTQRIIWFASSMTCRSAFGQVLKGQDIFAKKIREVIGLAEGFDVVDIFPTYKFLHVLSGMKRKLLNAHLKVDAIVEDVINEHKKNLAAGKSNGALGGEDLIDVLLRLMNDTSLQFPITNDNIKAVIVDMFAAGTETSSTTTVWAMAEMMKNPSVFTKAQAEVREAFRDKVSFDENDVEELKYLKLVIKETLRLHPPSPLLVPRECREDTDINGYTIPAKTKVMVNVWALGRDPKYWDDAESFKPERFEQCSVDFFGNNFEFLPFGGGRRICPGMSFGLANLYLPLAQLLYHFDWKLPTGIMPRDLDLTELSGITIARKGGLYLNATPYQPSRE</sequence>
<proteinExistence type="evidence at protein level"/>
<feature type="chain" id="PRO_0000409470" description="5-epiaristolochene 1,3-dihydroxylase">
    <location>
        <begin position="1"/>
        <end position="504"/>
    </location>
</feature>
<feature type="transmembrane region" description="Helical" evidence="2">
    <location>
        <begin position="2"/>
        <end position="22"/>
    </location>
</feature>
<feature type="binding site" description="axial binding residue" evidence="1">
    <location>
        <position position="442"/>
    </location>
    <ligand>
        <name>heme</name>
        <dbReference type="ChEBI" id="CHEBI:30413"/>
    </ligand>
    <ligandPart>
        <name>Fe</name>
        <dbReference type="ChEBI" id="CHEBI:18248"/>
    </ligandPart>
</feature>
<feature type="mutagenesis site" description="Decreased substrate affinity but catalytic activities unchanged." evidence="5">
    <original>S</original>
    <variation>A</variation>
    <variation>T</variation>
    <location>
        <position position="368"/>
    </location>
</feature>
<feature type="mutagenesis site" description="Decreased synthesis of 3-deoxycapsidiol and loss of production of capsidiol." evidence="5">
    <original>S</original>
    <variation>C</variation>
    <variation>V</variation>
    <location>
        <position position="368"/>
    </location>
</feature>
<feature type="mutagenesis site" description="Loss of both catalytic activities." evidence="5">
    <original>S</original>
    <variation>I</variation>
    <variation>F</variation>
    <location>
        <position position="368"/>
    </location>
</feature>
<feature type="mutagenesis site" description="Loss of activity toward premnaspirodiene." evidence="6">
    <original>S</original>
    <variation>V</variation>
    <location>
        <position position="482"/>
    </location>
</feature>
<feature type="mutagenesis site" description="Loss of activity toward premnaspirodiene." evidence="6">
    <original>I</original>
    <variation>V</variation>
    <location>
        <position position="484"/>
    </location>
</feature>
<feature type="mutagenesis site" description="Decreased synthesis of 3-deoxycapsidiol and near loss of production of capsidiol. Loss of activity toward premnaspirodiene." evidence="5 6">
    <original>I</original>
    <variation>A</variation>
    <location>
        <position position="486"/>
    </location>
</feature>
<accession>Q94FM7</accession>
<dbReference type="EC" id="1.14.14.149" evidence="4 5 6"/>
<dbReference type="EMBL" id="AF368376">
    <property type="protein sequence ID" value="AAK62342.2"/>
    <property type="molecule type" value="mRNA"/>
</dbReference>
<dbReference type="RefSeq" id="NP_001311564.1">
    <property type="nucleotide sequence ID" value="NM_001324635.1"/>
</dbReference>
<dbReference type="SMR" id="Q94FM7"/>
<dbReference type="STRING" id="4097.Q94FM7"/>
<dbReference type="PaxDb" id="4097-Q94FM7"/>
<dbReference type="GeneID" id="107759261"/>
<dbReference type="KEGG" id="ag:AAK62342"/>
<dbReference type="KEGG" id="nta:107759261"/>
<dbReference type="OrthoDB" id="2789670at2759"/>
<dbReference type="BioCyc" id="MetaCyc:EAH-MONOMER"/>
<dbReference type="BRENDA" id="1.14.14.149">
    <property type="organism ID" value="3645"/>
</dbReference>
<dbReference type="SABIO-RK" id="Q94FM7"/>
<dbReference type="Proteomes" id="UP000084051">
    <property type="component" value="Unplaced"/>
</dbReference>
<dbReference type="GO" id="GO:0016020">
    <property type="term" value="C:membrane"/>
    <property type="evidence" value="ECO:0007669"/>
    <property type="project" value="UniProtKB-SubCell"/>
</dbReference>
<dbReference type="GO" id="GO:0102170">
    <property type="term" value="F:5-epi-aristolochene-1,3-dihydroxylase activity"/>
    <property type="evidence" value="ECO:0007669"/>
    <property type="project" value="UniProtKB-EC"/>
</dbReference>
<dbReference type="GO" id="GO:0020037">
    <property type="term" value="F:heme binding"/>
    <property type="evidence" value="ECO:0007669"/>
    <property type="project" value="InterPro"/>
</dbReference>
<dbReference type="GO" id="GO:0005506">
    <property type="term" value="F:iron ion binding"/>
    <property type="evidence" value="ECO:0007669"/>
    <property type="project" value="InterPro"/>
</dbReference>
<dbReference type="CDD" id="cd11072">
    <property type="entry name" value="CYP71-like"/>
    <property type="match status" value="1"/>
</dbReference>
<dbReference type="FunFam" id="1.10.630.10:FF:000008">
    <property type="entry name" value="Cytochrome P450 71D8"/>
    <property type="match status" value="1"/>
</dbReference>
<dbReference type="Gene3D" id="1.10.630.10">
    <property type="entry name" value="Cytochrome P450"/>
    <property type="match status" value="1"/>
</dbReference>
<dbReference type="InterPro" id="IPR052306">
    <property type="entry name" value="CYP450_71D"/>
</dbReference>
<dbReference type="InterPro" id="IPR001128">
    <property type="entry name" value="Cyt_P450"/>
</dbReference>
<dbReference type="InterPro" id="IPR017972">
    <property type="entry name" value="Cyt_P450_CS"/>
</dbReference>
<dbReference type="InterPro" id="IPR002401">
    <property type="entry name" value="Cyt_P450_E_grp-I"/>
</dbReference>
<dbReference type="InterPro" id="IPR036396">
    <property type="entry name" value="Cyt_P450_sf"/>
</dbReference>
<dbReference type="PANTHER" id="PTHR47953:SF17">
    <property type="entry name" value="CYTOCHROME P450"/>
    <property type="match status" value="1"/>
</dbReference>
<dbReference type="PANTHER" id="PTHR47953">
    <property type="entry name" value="OS08G0105600 PROTEIN"/>
    <property type="match status" value="1"/>
</dbReference>
<dbReference type="Pfam" id="PF00067">
    <property type="entry name" value="p450"/>
    <property type="match status" value="1"/>
</dbReference>
<dbReference type="PRINTS" id="PR00463">
    <property type="entry name" value="EP450I"/>
</dbReference>
<dbReference type="PRINTS" id="PR00385">
    <property type="entry name" value="P450"/>
</dbReference>
<dbReference type="SUPFAM" id="SSF48264">
    <property type="entry name" value="Cytochrome P450"/>
    <property type="match status" value="1"/>
</dbReference>
<dbReference type="PROSITE" id="PS00086">
    <property type="entry name" value="CYTOCHROME_P450"/>
    <property type="match status" value="1"/>
</dbReference>
<protein>
    <recommendedName>
        <fullName>5-epiaristolochene 1,3-dihydroxylase</fullName>
        <shortName>NtEAH</shortName>
        <ecNumber evidence="4 5 6">1.14.14.149</ecNumber>
    </recommendedName>
    <alternativeName>
        <fullName>Cytochrome P450 71D20</fullName>
    </alternativeName>
</protein>